<reference key="1">
    <citation type="journal article" date="1997" name="Plant Physiol.">
        <title>Sequencing, genomic organization, and preliminary promoter analysis of a black cherry (R)-(+)-mandelonitrile lyase gene.</title>
        <authorList>
            <person name="Hu Z."/>
            <person name="Poulton J.E."/>
        </authorList>
    </citation>
    <scope>NUCLEOTIDE SEQUENCE [GENOMIC DNA / MRNA]</scope>
</reference>
<proteinExistence type="evidence at transcript level"/>
<keyword id="KW-1015">Disulfide bond</keyword>
<keyword id="KW-0274">FAD</keyword>
<keyword id="KW-0285">Flavoprotein</keyword>
<keyword id="KW-0325">Glycoprotein</keyword>
<keyword id="KW-0456">Lyase</keyword>
<keyword id="KW-0732">Signal</keyword>
<keyword id="KW-0926">Vacuole</keyword>
<organism>
    <name type="scientific">Prunus serotina</name>
    <name type="common">Black cherry</name>
    <dbReference type="NCBI Taxonomy" id="23207"/>
    <lineage>
        <taxon>Eukaryota</taxon>
        <taxon>Viridiplantae</taxon>
        <taxon>Streptophyta</taxon>
        <taxon>Embryophyta</taxon>
        <taxon>Tracheophyta</taxon>
        <taxon>Spermatophyta</taxon>
        <taxon>Magnoliopsida</taxon>
        <taxon>eudicotyledons</taxon>
        <taxon>Gunneridae</taxon>
        <taxon>Pentapetalae</taxon>
        <taxon>rosids</taxon>
        <taxon>fabids</taxon>
        <taxon>Rosales</taxon>
        <taxon>Rosaceae</taxon>
        <taxon>Amygdaloideae</taxon>
        <taxon>Amygdaleae</taxon>
        <taxon>Prunus</taxon>
    </lineage>
</organism>
<evidence type="ECO:0000250" key="1"/>
<evidence type="ECO:0000255" key="2"/>
<evidence type="ECO:0000305" key="3"/>
<feature type="signal peptide" evidence="2">
    <location>
        <begin position="1"/>
        <end position="27"/>
    </location>
</feature>
<feature type="chain" id="PRO_0000012342" description="(R)-mandelonitrile lyase 3">
    <location>
        <begin position="28"/>
        <end position="573"/>
    </location>
</feature>
<feature type="active site" description="Proton donor" evidence="1">
    <location>
        <position position="487"/>
    </location>
</feature>
<feature type="active site" description="Proton acceptor" evidence="1">
    <location>
        <position position="525"/>
    </location>
</feature>
<feature type="binding site" evidence="1">
    <location>
        <begin position="63"/>
        <end position="64"/>
    </location>
    <ligand>
        <name>FAD</name>
        <dbReference type="ChEBI" id="CHEBI:57692"/>
    </ligand>
</feature>
<feature type="binding site" evidence="1">
    <location>
        <begin position="82"/>
        <end position="83"/>
    </location>
    <ligand>
        <name>FAD</name>
        <dbReference type="ChEBI" id="CHEBI:57692"/>
    </ligand>
</feature>
<feature type="binding site" evidence="1">
    <location>
        <position position="129"/>
    </location>
    <ligand>
        <name>FAD</name>
        <dbReference type="ChEBI" id="CHEBI:57692"/>
    </ligand>
</feature>
<feature type="binding site" evidence="1">
    <location>
        <position position="133"/>
    </location>
    <ligand>
        <name>FAD</name>
        <dbReference type="ChEBI" id="CHEBI:57692"/>
    </ligand>
</feature>
<feature type="binding site" evidence="1">
    <location>
        <begin position="137"/>
        <end position="140"/>
    </location>
    <ligand>
        <name>FAD</name>
        <dbReference type="ChEBI" id="CHEBI:57692"/>
    </ligand>
</feature>
<feature type="binding site" evidence="1">
    <location>
        <position position="244"/>
    </location>
    <ligand>
        <name>FAD</name>
        <dbReference type="ChEBI" id="CHEBI:57692"/>
    </ligand>
</feature>
<feature type="binding site" evidence="1">
    <location>
        <position position="356"/>
    </location>
    <ligand>
        <name>substrate</name>
    </ligand>
</feature>
<feature type="binding site" evidence="1">
    <location>
        <position position="485"/>
    </location>
    <ligand>
        <name>substrate</name>
    </ligand>
</feature>
<feature type="binding site" evidence="1">
    <location>
        <begin position="486"/>
        <end position="487"/>
    </location>
    <ligand>
        <name>FAD</name>
        <dbReference type="ChEBI" id="CHEBI:57692"/>
    </ligand>
</feature>
<feature type="binding site" evidence="1">
    <location>
        <position position="515"/>
    </location>
    <ligand>
        <name>FAD</name>
        <dbReference type="ChEBI" id="CHEBI:57692"/>
    </ligand>
</feature>
<feature type="binding site" evidence="1">
    <location>
        <begin position="526"/>
        <end position="527"/>
    </location>
    <ligand>
        <name>FAD</name>
        <dbReference type="ChEBI" id="CHEBI:57692"/>
    </ligand>
</feature>
<feature type="glycosylation site" description="N-linked (GlcNAc...) asparagine" evidence="2">
    <location>
        <position position="30"/>
    </location>
</feature>
<feature type="glycosylation site" description="N-linked (GlcNAc...) asparagine" evidence="2">
    <location>
        <position position="75"/>
    </location>
</feature>
<feature type="glycosylation site" description="N-linked (GlcNAc...) asparagine" evidence="2">
    <location>
        <position position="145"/>
    </location>
</feature>
<feature type="glycosylation site" description="N-linked (GlcNAc...) asparagine" evidence="2">
    <location>
        <position position="150"/>
    </location>
</feature>
<feature type="glycosylation site" description="N-linked (GlcNAc...) asparagine" evidence="2">
    <location>
        <position position="162"/>
    </location>
</feature>
<feature type="glycosylation site" description="N-linked (GlcNAc...) asparagine" evidence="2">
    <location>
        <position position="218"/>
    </location>
</feature>
<feature type="glycosylation site" description="N-linked (GlcNAc...) asparagine" evidence="2">
    <location>
        <position position="252"/>
    </location>
</feature>
<feature type="glycosylation site" description="N-linked (GlcNAc...) asparagine" evidence="2">
    <location>
        <position position="267"/>
    </location>
</feature>
<feature type="glycosylation site" description="N-linked (GlcNAc...) asparagine" evidence="2">
    <location>
        <position position="309"/>
    </location>
</feature>
<feature type="glycosylation site" description="N-linked (GlcNAc...) asparagine" evidence="2">
    <location>
        <position position="380"/>
    </location>
</feature>
<feature type="glycosylation site" description="N-linked (GlcNAc...) asparagine" evidence="2">
    <location>
        <position position="402"/>
    </location>
</feature>
<feature type="glycosylation site" description="N-linked (GlcNAc...) asparagine" evidence="2">
    <location>
        <position position="420"/>
    </location>
</feature>
<feature type="glycosylation site" description="N-linked (GlcNAc...) asparagine" evidence="2">
    <location>
        <position position="467"/>
    </location>
</feature>
<feature type="disulfide bond" evidence="1">
    <location>
        <begin position="427"/>
        <end position="478"/>
    </location>
</feature>
<sequence>MVKSTMSAVLLVLHIFVLHLQYSEVQSLANTSSHDFSYLSFVYDATDPELEGSYDYIIVGGGTAGCPLAATLSANYSVLVLERGSLPTEYPNLLISDGFVYNLQQEDDGKTPVERFVSEDGIDNVRGRVLGGTSMINAGVYVRANTSFFNQTGIEWDMDLVNQTYEWVEDTIVFEPDSQTWQTVIGTAYLEAGILPNNGFSVDHLAGTRLTGSTFDNNGTRHASDELLNKGDPNNLRVAVQAAVEKIIFSSNTSGVTAIGVIYTDSNGTTHQAFVRGEGEVILSAGPIGSPQLLLLSGVGPESYLTSLNISVVASHPYVGQYIYDNPRNFINILPPNPIEASTVTVLGITSDFYQCSISSLPFDTPPFSFFPTTSYPLPNQTFAHIVNKVPGPLSHGTVTLNSSSDVRVGPNVKFNYYSNLTDLSHCVSGMKKLGEVLSTDALEPYKVEDLPGIDGFNILGIPLPENQTDDAAFETFCRESVASYWHYHGGCLVGKVLDDGFRVTGINALRVVDGSTFPSTPASHPQGFYLMLGRYMGIQILQERSASEDAIRNLGFQENILDSPKSTSSFAF</sequence>
<dbReference type="EC" id="4.1.2.10"/>
<dbReference type="EMBL" id="U51562">
    <property type="protein sequence ID" value="AAA96782.1"/>
    <property type="molecule type" value="Genomic_DNA"/>
</dbReference>
<dbReference type="EMBL" id="AF013161">
    <property type="protein sequence ID" value="AAB67714.1"/>
    <property type="molecule type" value="mRNA"/>
</dbReference>
<dbReference type="PIR" id="T07948">
    <property type="entry name" value="T07948"/>
</dbReference>
<dbReference type="SMR" id="P52707"/>
<dbReference type="GlyCosmos" id="P52707">
    <property type="glycosylation" value="13 sites, No reported glycans"/>
</dbReference>
<dbReference type="GO" id="GO:0033095">
    <property type="term" value="C:aleurone grain"/>
    <property type="evidence" value="ECO:0007669"/>
    <property type="project" value="UniProtKB-SubCell"/>
</dbReference>
<dbReference type="GO" id="GO:0005773">
    <property type="term" value="C:vacuole"/>
    <property type="evidence" value="ECO:0007669"/>
    <property type="project" value="UniProtKB-KW"/>
</dbReference>
<dbReference type="GO" id="GO:0050660">
    <property type="term" value="F:flavin adenine dinucleotide binding"/>
    <property type="evidence" value="ECO:0007669"/>
    <property type="project" value="InterPro"/>
</dbReference>
<dbReference type="GO" id="GO:0046593">
    <property type="term" value="F:mandelonitrile lyase activity"/>
    <property type="evidence" value="ECO:0007669"/>
    <property type="project" value="UniProtKB-EC"/>
</dbReference>
<dbReference type="GO" id="GO:0016614">
    <property type="term" value="F:oxidoreductase activity, acting on CH-OH group of donors"/>
    <property type="evidence" value="ECO:0007669"/>
    <property type="project" value="InterPro"/>
</dbReference>
<dbReference type="Gene3D" id="3.30.410.40">
    <property type="match status" value="1"/>
</dbReference>
<dbReference type="Gene3D" id="3.50.50.60">
    <property type="entry name" value="FAD/NAD(P)-binding domain"/>
    <property type="match status" value="1"/>
</dbReference>
<dbReference type="InterPro" id="IPR036188">
    <property type="entry name" value="FAD/NAD-bd_sf"/>
</dbReference>
<dbReference type="InterPro" id="IPR051871">
    <property type="entry name" value="GMC_Oxidoreductase-Related"/>
</dbReference>
<dbReference type="InterPro" id="IPR012132">
    <property type="entry name" value="GMC_OxRdtase"/>
</dbReference>
<dbReference type="InterPro" id="IPR000172">
    <property type="entry name" value="GMC_OxRdtase_N"/>
</dbReference>
<dbReference type="InterPro" id="IPR007867">
    <property type="entry name" value="GMC_OxRtase_C"/>
</dbReference>
<dbReference type="PANTHER" id="PTHR45968:SF23">
    <property type="entry name" value="GLUCOSE-METHANOL-CHOLINE OXIDOREDUCTASE N-TERMINAL DOMAIN-CONTAINING PROTEIN"/>
    <property type="match status" value="1"/>
</dbReference>
<dbReference type="PANTHER" id="PTHR45968">
    <property type="entry name" value="OSJNBA0019K04.7 PROTEIN"/>
    <property type="match status" value="1"/>
</dbReference>
<dbReference type="Pfam" id="PF05199">
    <property type="entry name" value="GMC_oxred_C"/>
    <property type="match status" value="1"/>
</dbReference>
<dbReference type="Pfam" id="PF00732">
    <property type="entry name" value="GMC_oxred_N"/>
    <property type="match status" value="1"/>
</dbReference>
<dbReference type="PIRSF" id="PIRSF000137">
    <property type="entry name" value="Alcohol_oxidase"/>
    <property type="match status" value="1"/>
</dbReference>
<dbReference type="SUPFAM" id="SSF54373">
    <property type="entry name" value="FAD-linked reductases, C-terminal domain"/>
    <property type="match status" value="1"/>
</dbReference>
<dbReference type="SUPFAM" id="SSF51905">
    <property type="entry name" value="FAD/NAD(P)-binding domain"/>
    <property type="match status" value="1"/>
</dbReference>
<dbReference type="PROSITE" id="PS00623">
    <property type="entry name" value="GMC_OXRED_1"/>
    <property type="match status" value="1"/>
</dbReference>
<dbReference type="PROSITE" id="PS00624">
    <property type="entry name" value="GMC_OXRED_2"/>
    <property type="match status" value="1"/>
</dbReference>
<protein>
    <recommendedName>
        <fullName>(R)-mandelonitrile lyase 3</fullName>
        <ecNumber>4.1.2.10</ecNumber>
    </recommendedName>
    <alternativeName>
        <fullName>Hydroxynitrile lyase 3</fullName>
        <shortName>(R)-oxynitrilase 3</shortName>
    </alternativeName>
</protein>
<comment type="function">
    <text>Involved in cyanogenesis, the release of HCN from injured tissues. Catalyzes the stereospecific addition of HCN to a variety of aldehydes in vitro. It is a major seed constituent, and could have the additional role of a storage form for reduced nitrogen.</text>
</comment>
<comment type="catalytic activity">
    <reaction>
        <text>(R)-mandelonitrile = benzaldehyde + hydrogen cyanide</text>
        <dbReference type="Rhea" id="RHEA:18313"/>
        <dbReference type="ChEBI" id="CHEBI:17169"/>
        <dbReference type="ChEBI" id="CHEBI:18407"/>
        <dbReference type="ChEBI" id="CHEBI:18450"/>
        <dbReference type="EC" id="4.1.2.10"/>
    </reaction>
</comment>
<comment type="cofactor">
    <cofactor>
        <name>FAD</name>
        <dbReference type="ChEBI" id="CHEBI:57692"/>
    </cofactor>
</comment>
<comment type="subunit">
    <text>Monomer.</text>
</comment>
<comment type="subcellular location">
    <subcellularLocation>
        <location evidence="1">Vacuole</location>
        <location evidence="1">Aleurone grain</location>
    </subcellularLocation>
    <text evidence="1">Primarily found within protein bodies of the cotyledonary parenchyma cells, with lesser amounts within the procambium.</text>
</comment>
<comment type="similarity">
    <text evidence="3">Belongs to the GMC oxidoreductase family.</text>
</comment>
<accession>P52707</accession>
<gene>
    <name type="primary">MDL3</name>
</gene>
<name>MDL3_PRUSE</name>